<accession>A3RK74</accession>
<accession>F1RBQ1</accession>
<accession>F8W360</accession>
<organism>
    <name type="scientific">Danio rerio</name>
    <name type="common">Zebrafish</name>
    <name type="synonym">Brachydanio rerio</name>
    <dbReference type="NCBI Taxonomy" id="7955"/>
    <lineage>
        <taxon>Eukaryota</taxon>
        <taxon>Metazoa</taxon>
        <taxon>Chordata</taxon>
        <taxon>Craniata</taxon>
        <taxon>Vertebrata</taxon>
        <taxon>Euteleostomi</taxon>
        <taxon>Actinopterygii</taxon>
        <taxon>Neopterygii</taxon>
        <taxon>Teleostei</taxon>
        <taxon>Ostariophysi</taxon>
        <taxon>Cypriniformes</taxon>
        <taxon>Danionidae</taxon>
        <taxon>Danioninae</taxon>
        <taxon>Danio</taxon>
    </lineage>
</organism>
<proteinExistence type="evidence at transcript level"/>
<protein>
    <recommendedName>
        <fullName>Forkhead box protein O1-A</fullName>
    </recommendedName>
</protein>
<dbReference type="EMBL" id="EF421424">
    <property type="protein sequence ID" value="ABO10192.1"/>
    <property type="molecule type" value="mRNA"/>
</dbReference>
<dbReference type="EMBL" id="BX649258">
    <property type="status" value="NOT_ANNOTATED_CDS"/>
    <property type="molecule type" value="Genomic_DNA"/>
</dbReference>
<dbReference type="RefSeq" id="NP_001070725.2">
    <property type="nucleotide sequence ID" value="NM_001077257.2"/>
</dbReference>
<dbReference type="RefSeq" id="XP_009289702.1">
    <property type="nucleotide sequence ID" value="XM_009291427.4"/>
</dbReference>
<dbReference type="SMR" id="A3RK74"/>
<dbReference type="FunCoup" id="A3RK74">
    <property type="interactions" value="661"/>
</dbReference>
<dbReference type="STRING" id="7955.ENSDARP00000134884"/>
<dbReference type="PaxDb" id="7955-ENSDARP00000087386"/>
<dbReference type="Ensembl" id="ENSDART00000171723">
    <property type="protein sequence ID" value="ENSDARP00000134884"/>
    <property type="gene ID" value="ENSDARG00000099555"/>
</dbReference>
<dbReference type="Ensembl" id="ENSDART00000179778">
    <property type="protein sequence ID" value="ENSDARP00000155088"/>
    <property type="gene ID" value="ENSDARG00000099555"/>
</dbReference>
<dbReference type="GeneID" id="768121"/>
<dbReference type="KEGG" id="dre:768121"/>
<dbReference type="AGR" id="ZFIN:ZDB-GENE-061013-59"/>
<dbReference type="CTD" id="768121"/>
<dbReference type="ZFIN" id="ZDB-GENE-061013-59">
    <property type="gene designation" value="foxo1a"/>
</dbReference>
<dbReference type="eggNOG" id="KOG2294">
    <property type="taxonomic scope" value="Eukaryota"/>
</dbReference>
<dbReference type="HOGENOM" id="CLU_023456_1_1_1"/>
<dbReference type="InParanoid" id="A3RK74"/>
<dbReference type="OMA" id="PPHTHAK"/>
<dbReference type="OrthoDB" id="5954824at2759"/>
<dbReference type="PhylomeDB" id="A3RK74"/>
<dbReference type="Reactome" id="R-DRE-198693">
    <property type="pathway name" value="AKT phosphorylates targets in the nucleus"/>
</dbReference>
<dbReference type="Reactome" id="R-DRE-211163">
    <property type="pathway name" value="AKT-mediated inactivation of FOXO1A"/>
</dbReference>
<dbReference type="Reactome" id="R-DRE-5687128">
    <property type="pathway name" value="MAPK6/MAPK4 signaling"/>
</dbReference>
<dbReference type="Reactome" id="R-DRE-9614399">
    <property type="pathway name" value="Regulation of localization of FOXO transcription factors"/>
</dbReference>
<dbReference type="Reactome" id="R-DRE-9617828">
    <property type="pathway name" value="FOXO-mediated transcription of cell cycle genes"/>
</dbReference>
<dbReference type="PRO" id="PR:A3RK74"/>
<dbReference type="Proteomes" id="UP000000437">
    <property type="component" value="Chromosome 15"/>
</dbReference>
<dbReference type="Bgee" id="ENSDARG00000099555">
    <property type="expression patterns" value="Expressed in cardiac ventricle and 21 other cell types or tissues"/>
</dbReference>
<dbReference type="ExpressionAtlas" id="A3RK74">
    <property type="expression patterns" value="baseline and differential"/>
</dbReference>
<dbReference type="GO" id="GO:0005737">
    <property type="term" value="C:cytoplasm"/>
    <property type="evidence" value="ECO:0000250"/>
    <property type="project" value="UniProtKB"/>
</dbReference>
<dbReference type="GO" id="GO:0005634">
    <property type="term" value="C:nucleus"/>
    <property type="evidence" value="ECO:0000318"/>
    <property type="project" value="GO_Central"/>
</dbReference>
<dbReference type="GO" id="GO:0000981">
    <property type="term" value="F:DNA-binding transcription factor activity, RNA polymerase II-specific"/>
    <property type="evidence" value="ECO:0000318"/>
    <property type="project" value="GO_Central"/>
</dbReference>
<dbReference type="GO" id="GO:0000978">
    <property type="term" value="F:RNA polymerase II cis-regulatory region sequence-specific DNA binding"/>
    <property type="evidence" value="ECO:0000318"/>
    <property type="project" value="GO_Central"/>
</dbReference>
<dbReference type="GO" id="GO:0006094">
    <property type="term" value="P:gluconeogenesis"/>
    <property type="evidence" value="ECO:0000316"/>
    <property type="project" value="ZFIN"/>
</dbReference>
<dbReference type="GO" id="GO:0001945">
    <property type="term" value="P:lymph vessel development"/>
    <property type="evidence" value="ECO:0000316"/>
    <property type="project" value="ZFIN"/>
</dbReference>
<dbReference type="GO" id="GO:0006357">
    <property type="term" value="P:regulation of transcription by RNA polymerase II"/>
    <property type="evidence" value="ECO:0000318"/>
    <property type="project" value="GO_Central"/>
</dbReference>
<dbReference type="GO" id="GO:0051145">
    <property type="term" value="P:smooth muscle cell differentiation"/>
    <property type="evidence" value="ECO:0000315"/>
    <property type="project" value="ZFIN"/>
</dbReference>
<dbReference type="GO" id="GO:0048659">
    <property type="term" value="P:smooth muscle cell proliferation"/>
    <property type="evidence" value="ECO:0000315"/>
    <property type="project" value="ZFIN"/>
</dbReference>
<dbReference type="GO" id="GO:0048745">
    <property type="term" value="P:smooth muscle tissue development"/>
    <property type="evidence" value="ECO:0000315"/>
    <property type="project" value="ZFIN"/>
</dbReference>
<dbReference type="CDD" id="cd20060">
    <property type="entry name" value="FH_FOXO1"/>
    <property type="match status" value="1"/>
</dbReference>
<dbReference type="FunFam" id="1.10.10.10:FF:000032">
    <property type="entry name" value="Forkhead box protein O4"/>
    <property type="match status" value="1"/>
</dbReference>
<dbReference type="Gene3D" id="1.10.10.10">
    <property type="entry name" value="Winged helix-like DNA-binding domain superfamily/Winged helix DNA-binding domain"/>
    <property type="match status" value="1"/>
</dbReference>
<dbReference type="InterPro" id="IPR047408">
    <property type="entry name" value="FH_FOXO1"/>
</dbReference>
<dbReference type="InterPro" id="IPR001766">
    <property type="entry name" value="Fork_head_dom"/>
</dbReference>
<dbReference type="InterPro" id="IPR032067">
    <property type="entry name" value="FOXO-TAD"/>
</dbReference>
<dbReference type="InterPro" id="IPR032068">
    <property type="entry name" value="FOXO_KIX-bd"/>
</dbReference>
<dbReference type="InterPro" id="IPR030456">
    <property type="entry name" value="TF_fork_head_CS_2"/>
</dbReference>
<dbReference type="InterPro" id="IPR036388">
    <property type="entry name" value="WH-like_DNA-bd_sf"/>
</dbReference>
<dbReference type="InterPro" id="IPR036390">
    <property type="entry name" value="WH_DNA-bd_sf"/>
</dbReference>
<dbReference type="PANTHER" id="PTHR45767">
    <property type="entry name" value="FORKHEAD BOX PROTEIN O"/>
    <property type="match status" value="1"/>
</dbReference>
<dbReference type="PANTHER" id="PTHR45767:SF1">
    <property type="entry name" value="FORKHEAD BOX PROTEIN O1"/>
    <property type="match status" value="1"/>
</dbReference>
<dbReference type="Pfam" id="PF00250">
    <property type="entry name" value="Forkhead"/>
    <property type="match status" value="1"/>
</dbReference>
<dbReference type="Pfam" id="PF16676">
    <property type="entry name" value="FOXO-TAD"/>
    <property type="match status" value="1"/>
</dbReference>
<dbReference type="Pfam" id="PF16675">
    <property type="entry name" value="FOXO_KIX_bdg"/>
    <property type="match status" value="1"/>
</dbReference>
<dbReference type="PRINTS" id="PR00053">
    <property type="entry name" value="FORKHEAD"/>
</dbReference>
<dbReference type="SMART" id="SM00339">
    <property type="entry name" value="FH"/>
    <property type="match status" value="1"/>
</dbReference>
<dbReference type="SUPFAM" id="SSF46785">
    <property type="entry name" value="Winged helix' DNA-binding domain"/>
    <property type="match status" value="1"/>
</dbReference>
<dbReference type="PROSITE" id="PS00658">
    <property type="entry name" value="FORK_HEAD_2"/>
    <property type="match status" value="1"/>
</dbReference>
<dbReference type="PROSITE" id="PS50039">
    <property type="entry name" value="FORK_HEAD_3"/>
    <property type="match status" value="1"/>
</dbReference>
<evidence type="ECO:0000250" key="1">
    <source>
        <dbReference type="UniProtKB" id="Q12778"/>
    </source>
</evidence>
<evidence type="ECO:0000250" key="2">
    <source>
        <dbReference type="UniProtKB" id="Q9R1E0"/>
    </source>
</evidence>
<evidence type="ECO:0000255" key="3">
    <source>
        <dbReference type="PROSITE-ProRule" id="PRU00089"/>
    </source>
</evidence>
<evidence type="ECO:0000256" key="4">
    <source>
        <dbReference type="SAM" id="MobiDB-lite"/>
    </source>
</evidence>
<evidence type="ECO:0000269" key="5">
    <source>
    </source>
</evidence>
<feature type="chain" id="PRO_0000419246" description="Forkhead box protein O1-A">
    <location>
        <begin position="1"/>
        <end position="652"/>
    </location>
</feature>
<feature type="DNA-binding region" description="Fork-head" evidence="3">
    <location>
        <begin position="134"/>
        <end position="228"/>
    </location>
</feature>
<feature type="region of interest" description="Disordered" evidence="4">
    <location>
        <begin position="1"/>
        <end position="57"/>
    </location>
</feature>
<feature type="region of interest" description="Disordered" evidence="4">
    <location>
        <begin position="208"/>
        <end position="277"/>
    </location>
</feature>
<feature type="region of interest" description="Disordered" evidence="4">
    <location>
        <begin position="359"/>
        <end position="406"/>
    </location>
</feature>
<feature type="compositionally biased region" description="Polar residues" evidence="4">
    <location>
        <begin position="41"/>
        <end position="57"/>
    </location>
</feature>
<feature type="compositionally biased region" description="Basic residues" evidence="4">
    <location>
        <begin position="238"/>
        <end position="249"/>
    </location>
</feature>
<feature type="compositionally biased region" description="Low complexity" evidence="4">
    <location>
        <begin position="362"/>
        <end position="397"/>
    </location>
</feature>
<gene>
    <name type="primary">foxo1a</name>
    <name type="synonym">foxo1</name>
    <name type="synonym">foxO1a.1</name>
</gene>
<reference key="1">
    <citation type="journal article" date="2008" name="Hum. Mol. Genet.">
        <title>FOXC1 is required for cell viability and resistance to oxidative stress in the eye through the transcriptional regulation of FOXO1A.</title>
        <authorList>
            <person name="Berry F.B."/>
            <person name="Skarie J.M."/>
            <person name="Mirzayans F."/>
            <person name="Fortin Y."/>
            <person name="Hudson T.J."/>
            <person name="Raymond V."/>
            <person name="Link B.A."/>
            <person name="Walter M.A."/>
        </authorList>
    </citation>
    <scope>NUCLEOTIDE SEQUENCE [MRNA]</scope>
    <scope>FUNCTION</scope>
    <scope>DEVELOPMENTAL STAGE</scope>
</reference>
<reference key="2">
    <citation type="journal article" date="2013" name="Nature">
        <title>The zebrafish reference genome sequence and its relationship to the human genome.</title>
        <authorList>
            <person name="Howe K."/>
            <person name="Clark M.D."/>
            <person name="Torroja C.F."/>
            <person name="Torrance J."/>
            <person name="Berthelot C."/>
            <person name="Muffato M."/>
            <person name="Collins J.E."/>
            <person name="Humphray S."/>
            <person name="McLaren K."/>
            <person name="Matthews L."/>
            <person name="McLaren S."/>
            <person name="Sealy I."/>
            <person name="Caccamo M."/>
            <person name="Churcher C."/>
            <person name="Scott C."/>
            <person name="Barrett J.C."/>
            <person name="Koch R."/>
            <person name="Rauch G.J."/>
            <person name="White S."/>
            <person name="Chow W."/>
            <person name="Kilian B."/>
            <person name="Quintais L.T."/>
            <person name="Guerra-Assuncao J.A."/>
            <person name="Zhou Y."/>
            <person name="Gu Y."/>
            <person name="Yen J."/>
            <person name="Vogel J.H."/>
            <person name="Eyre T."/>
            <person name="Redmond S."/>
            <person name="Banerjee R."/>
            <person name="Chi J."/>
            <person name="Fu B."/>
            <person name="Langley E."/>
            <person name="Maguire S.F."/>
            <person name="Laird G.K."/>
            <person name="Lloyd D."/>
            <person name="Kenyon E."/>
            <person name="Donaldson S."/>
            <person name="Sehra H."/>
            <person name="Almeida-King J."/>
            <person name="Loveland J."/>
            <person name="Trevanion S."/>
            <person name="Jones M."/>
            <person name="Quail M."/>
            <person name="Willey D."/>
            <person name="Hunt A."/>
            <person name="Burton J."/>
            <person name="Sims S."/>
            <person name="McLay K."/>
            <person name="Plumb B."/>
            <person name="Davis J."/>
            <person name="Clee C."/>
            <person name="Oliver K."/>
            <person name="Clark R."/>
            <person name="Riddle C."/>
            <person name="Elliot D."/>
            <person name="Threadgold G."/>
            <person name="Harden G."/>
            <person name="Ware D."/>
            <person name="Begum S."/>
            <person name="Mortimore B."/>
            <person name="Kerry G."/>
            <person name="Heath P."/>
            <person name="Phillimore B."/>
            <person name="Tracey A."/>
            <person name="Corby N."/>
            <person name="Dunn M."/>
            <person name="Johnson C."/>
            <person name="Wood J."/>
            <person name="Clark S."/>
            <person name="Pelan S."/>
            <person name="Griffiths G."/>
            <person name="Smith M."/>
            <person name="Glithero R."/>
            <person name="Howden P."/>
            <person name="Barker N."/>
            <person name="Lloyd C."/>
            <person name="Stevens C."/>
            <person name="Harley J."/>
            <person name="Holt K."/>
            <person name="Panagiotidis G."/>
            <person name="Lovell J."/>
            <person name="Beasley H."/>
            <person name="Henderson C."/>
            <person name="Gordon D."/>
            <person name="Auger K."/>
            <person name="Wright D."/>
            <person name="Collins J."/>
            <person name="Raisen C."/>
            <person name="Dyer L."/>
            <person name="Leung K."/>
            <person name="Robertson L."/>
            <person name="Ambridge K."/>
            <person name="Leongamornlert D."/>
            <person name="McGuire S."/>
            <person name="Gilderthorp R."/>
            <person name="Griffiths C."/>
            <person name="Manthravadi D."/>
            <person name="Nichol S."/>
            <person name="Barker G."/>
            <person name="Whitehead S."/>
            <person name="Kay M."/>
            <person name="Brown J."/>
            <person name="Murnane C."/>
            <person name="Gray E."/>
            <person name="Humphries M."/>
            <person name="Sycamore N."/>
            <person name="Barker D."/>
            <person name="Saunders D."/>
            <person name="Wallis J."/>
            <person name="Babbage A."/>
            <person name="Hammond S."/>
            <person name="Mashreghi-Mohammadi M."/>
            <person name="Barr L."/>
            <person name="Martin S."/>
            <person name="Wray P."/>
            <person name="Ellington A."/>
            <person name="Matthews N."/>
            <person name="Ellwood M."/>
            <person name="Woodmansey R."/>
            <person name="Clark G."/>
            <person name="Cooper J."/>
            <person name="Tromans A."/>
            <person name="Grafham D."/>
            <person name="Skuce C."/>
            <person name="Pandian R."/>
            <person name="Andrews R."/>
            <person name="Harrison E."/>
            <person name="Kimberley A."/>
            <person name="Garnett J."/>
            <person name="Fosker N."/>
            <person name="Hall R."/>
            <person name="Garner P."/>
            <person name="Kelly D."/>
            <person name="Bird C."/>
            <person name="Palmer S."/>
            <person name="Gehring I."/>
            <person name="Berger A."/>
            <person name="Dooley C.M."/>
            <person name="Ersan-Urun Z."/>
            <person name="Eser C."/>
            <person name="Geiger H."/>
            <person name="Geisler M."/>
            <person name="Karotki L."/>
            <person name="Kirn A."/>
            <person name="Konantz J."/>
            <person name="Konantz M."/>
            <person name="Oberlander M."/>
            <person name="Rudolph-Geiger S."/>
            <person name="Teucke M."/>
            <person name="Lanz C."/>
            <person name="Raddatz G."/>
            <person name="Osoegawa K."/>
            <person name="Zhu B."/>
            <person name="Rapp A."/>
            <person name="Widaa S."/>
            <person name="Langford C."/>
            <person name="Yang F."/>
            <person name="Schuster S.C."/>
            <person name="Carter N.P."/>
            <person name="Harrow J."/>
            <person name="Ning Z."/>
            <person name="Herrero J."/>
            <person name="Searle S.M."/>
            <person name="Enright A."/>
            <person name="Geisler R."/>
            <person name="Plasterk R.H."/>
            <person name="Lee C."/>
            <person name="Westerfield M."/>
            <person name="de Jong P.J."/>
            <person name="Zon L.I."/>
            <person name="Postlethwait J.H."/>
            <person name="Nusslein-Volhard C."/>
            <person name="Hubbard T.J."/>
            <person name="Roest Crollius H."/>
            <person name="Rogers J."/>
            <person name="Stemple D.L."/>
        </authorList>
    </citation>
    <scope>NUCLEOTIDE SEQUENCE [LARGE SCALE GENOMIC DNA]</scope>
    <source>
        <strain>Tuebingen</strain>
    </source>
</reference>
<keyword id="KW-0963">Cytoplasm</keyword>
<keyword id="KW-0238">DNA-binding</keyword>
<keyword id="KW-0539">Nucleus</keyword>
<keyword id="KW-1185">Reference proteome</keyword>
<keyword id="KW-0804">Transcription</keyword>
<keyword id="KW-0805">Transcription regulation</keyword>
<comment type="function">
    <text evidence="1 2 5">Transcription factor that regulates metabolic homeostasis in response to oxidative stress (By similarity). Binds to the consensus sequence 5'-TT[G/A]TTTTG-3' and the related Daf-16 family binding element (DBE) with consensus sequence 5'-TT[G/A]TTTAC-3' (By similarity). Main regulator of redox balance and osteoblast numbers and controls bone mass. Orchestrates the endocrine function of the skeleton in regulating glucose metabolism (By similarity). May be involved in regulating cellular homeostasis in the eye (PubMed:17993506). May act as a positive regulator of apoptosis in cardiac smooth muscle cells as a result of its transcriptional activation of pro-apoptotic genes (By similarity).</text>
</comment>
<comment type="subcellular location">
    <subcellularLocation>
        <location evidence="2">Cytoplasm</location>
    </subcellularLocation>
    <subcellularLocation>
        <location evidence="2">Nucleus</location>
    </subcellularLocation>
    <text evidence="2">Shuttles between the cytoplasm and nucleus.</text>
</comment>
<comment type="developmental stage">
    <text evidence="5">Expressed in the developing eye. In 48h embryos, enriched within the periocular mesenchyme (POM), in the branchial arch region and in the developing pancreas.</text>
</comment>
<sequence>MADAAQNQMVEIDPDFEPLSRPRSCTWPLPRPEFPNPAAADSNTSSPAPSVKQEPSSTADFINNLSLLEENEDYPDQKPLMLCSEFQCQENCIHQQQIPSQQQQVPVLSSPVAAAAAAAAAAQRKSSSSRRNAWGNMSYADLITKAIESSPEKRLTLSQIYDWMVKSVPYFKDKGDSNSSAGWKNSIRHNLSLHSRFIRVQNEGTGKSSWWMLNPEGGKSGKSPRRRAASMDNNSKFAKSRGRAAKKKLALQGGPEGGADSPGSQYGKWPGSPNSHSNDDFEAWTAFRPRTSSNASTLSGRLSPFIDDELGDSDVHMVYPGPGSGTKMTSTLPSLSEMAGSLGHSGSENVMENLLDNLNLLSPKNPSTGGPGSGSNQSSPSSLMQASPGYSPYSSPGLSAVSQQTQQDFRKCLYGQAGMGSMSPMPMQPLPESKPSFGPGGGTMGQFNCTAGLLKELLTSDGEPGDLMPSVDTVVSQSAGGSGCMLPPYSSGRNELMGGGPTHSHTLSHPHNMHGQAPPTSVALNGRSLHPLTAIGHSSVGGRLGSGKSPMQMQYGGSGHLGGGLPPYCSMSSNGYGRGPGMMAHQQLQHLEKLPSDLDGMPIERFECDVESILHDTLMDGESLDFNFDPMNSQQGFVPHSVKTTTHSWVSG</sequence>
<name>FX1AA_DANRE</name>